<comment type="function">
    <text evidence="3">Catalytic component of the histone acetylase B (HAT-B) complex. Acetylates 'Lys-12' of histone H4 which is required for telomeric silencing. Has intrinsic substrate specificity that modifies lysine in recognition sequence GXGKXG. Involved in DNA double-strand break repair.</text>
</comment>
<comment type="catalytic activity">
    <reaction evidence="3">
        <text>L-lysyl-[protein] + acetyl-CoA = N(6)-acetyl-L-lysyl-[protein] + CoA + H(+)</text>
        <dbReference type="Rhea" id="RHEA:45948"/>
        <dbReference type="Rhea" id="RHEA-COMP:9752"/>
        <dbReference type="Rhea" id="RHEA-COMP:10731"/>
        <dbReference type="ChEBI" id="CHEBI:15378"/>
        <dbReference type="ChEBI" id="CHEBI:29969"/>
        <dbReference type="ChEBI" id="CHEBI:57287"/>
        <dbReference type="ChEBI" id="CHEBI:57288"/>
        <dbReference type="ChEBI" id="CHEBI:61930"/>
        <dbReference type="EC" id="2.3.1.48"/>
    </reaction>
</comment>
<comment type="subunit">
    <text evidence="3">Component of the HAT-B complex composed of at least HAT1 and HAT2. The HAT-B complex binds to histone H4 tail.</text>
</comment>
<comment type="subcellular location">
    <subcellularLocation>
        <location evidence="1">Cytoplasm</location>
    </subcellularLocation>
    <subcellularLocation>
        <location evidence="1">Nucleus</location>
    </subcellularLocation>
</comment>
<comment type="similarity">
    <text evidence="5">Belongs to the HAT1 family.</text>
</comment>
<proteinExistence type="inferred from homology"/>
<sequence length="388" mass="45819">MSIDDFKPEKWTISSNEALKLSLVSEDNAIQFSPTFTYPIFGTEEQIFGYKDLVIHLAFDAITFKPFLNVKFSSKFEGSEEELVNIKEKLLEYLPIDDTIYKDEEKWIDSFKKEQESIEAYKNDQNIDEYKIDNADFEIYKVNLQDPKMKRFHRRIQIFSLLFIEAASYIDEDDPKWEIFIVQTKKDKKFVGYATAYNYWYYPGANNFDSESKYRYRGKISQFLILPPYQGRGHGSHLYNSIVKNWRNDSSILEIVVEDPNESFDDLRDVNDLEMLYKDGFFNKLPQERPIPNAWIESTRLKYKIEKRQFSRLLEMILLSTGSNNFEYQVKQRLLIKNKDGLEGMEVSDIKDALNKSFESLREDYDRILGKCQFSNDADGPSKKKIKT</sequence>
<protein>
    <recommendedName>
        <fullName>Histone acetyltransferase type B catalytic subunit</fullName>
        <ecNumber evidence="3">2.3.1.48</ecNumber>
    </recommendedName>
</protein>
<name>HAT1_CANGA</name>
<gene>
    <name type="primary">HAT1</name>
    <name type="ordered locus">CAGL0L09042g</name>
</gene>
<dbReference type="EC" id="2.3.1.48" evidence="3"/>
<dbReference type="EMBL" id="CR380958">
    <property type="protein sequence ID" value="CAG62139.1"/>
    <property type="molecule type" value="Genomic_DNA"/>
</dbReference>
<dbReference type="RefSeq" id="XP_449169.1">
    <property type="nucleotide sequence ID" value="XM_449169.1"/>
</dbReference>
<dbReference type="SMR" id="Q6FKS5"/>
<dbReference type="FunCoup" id="Q6FKS5">
    <property type="interactions" value="1236"/>
</dbReference>
<dbReference type="STRING" id="284593.Q6FKS5"/>
<dbReference type="EnsemblFungi" id="CAGL0L09042g-T">
    <property type="protein sequence ID" value="CAGL0L09042g-T-p1"/>
    <property type="gene ID" value="CAGL0L09042g"/>
</dbReference>
<dbReference type="KEGG" id="cgr:2891100"/>
<dbReference type="CGD" id="CAL0135094">
    <property type="gene designation" value="CAGL0L09042g"/>
</dbReference>
<dbReference type="VEuPathDB" id="FungiDB:CAGL0L09042g"/>
<dbReference type="eggNOG" id="KOG2696">
    <property type="taxonomic scope" value="Eukaryota"/>
</dbReference>
<dbReference type="HOGENOM" id="CLU_036024_2_1_1"/>
<dbReference type="InParanoid" id="Q6FKS5"/>
<dbReference type="OMA" id="HNANECI"/>
<dbReference type="Proteomes" id="UP000002428">
    <property type="component" value="Chromosome L"/>
</dbReference>
<dbReference type="GO" id="GO:0000781">
    <property type="term" value="C:chromosome, telomeric region"/>
    <property type="evidence" value="ECO:0007669"/>
    <property type="project" value="GOC"/>
</dbReference>
<dbReference type="GO" id="GO:0005737">
    <property type="term" value="C:cytoplasm"/>
    <property type="evidence" value="ECO:0007669"/>
    <property type="project" value="UniProtKB-SubCell"/>
</dbReference>
<dbReference type="GO" id="GO:0000123">
    <property type="term" value="C:histone acetyltransferase complex"/>
    <property type="evidence" value="ECO:0007669"/>
    <property type="project" value="EnsemblFungi"/>
</dbReference>
<dbReference type="GO" id="GO:0005634">
    <property type="term" value="C:nucleus"/>
    <property type="evidence" value="ECO:0007669"/>
    <property type="project" value="UniProtKB-SubCell"/>
</dbReference>
<dbReference type="GO" id="GO:0003682">
    <property type="term" value="F:chromatin binding"/>
    <property type="evidence" value="ECO:0007669"/>
    <property type="project" value="EnsemblFungi"/>
</dbReference>
<dbReference type="GO" id="GO:0004402">
    <property type="term" value="F:histone acetyltransferase activity"/>
    <property type="evidence" value="ECO:0007669"/>
    <property type="project" value="UniProtKB-EC"/>
</dbReference>
<dbReference type="GO" id="GO:0042393">
    <property type="term" value="F:histone binding"/>
    <property type="evidence" value="ECO:0007669"/>
    <property type="project" value="InterPro"/>
</dbReference>
<dbReference type="GO" id="GO:0006302">
    <property type="term" value="P:double-strand break repair"/>
    <property type="evidence" value="ECO:0007669"/>
    <property type="project" value="EnsemblFungi"/>
</dbReference>
<dbReference type="GO" id="GO:0031509">
    <property type="term" value="P:subtelomeric heterochromatin formation"/>
    <property type="evidence" value="ECO:0007669"/>
    <property type="project" value="EnsemblFungi"/>
</dbReference>
<dbReference type="CDD" id="cd04301">
    <property type="entry name" value="NAT_SF"/>
    <property type="match status" value="1"/>
</dbReference>
<dbReference type="FunFam" id="3.40.630.30:FF:000114">
    <property type="entry name" value="Histone acetyltransferase type B catalytic subunit"/>
    <property type="match status" value="1"/>
</dbReference>
<dbReference type="Gene3D" id="1.10.10.390">
    <property type="match status" value="1"/>
</dbReference>
<dbReference type="Gene3D" id="3.40.630.30">
    <property type="match status" value="1"/>
</dbReference>
<dbReference type="Gene3D" id="3.90.360.10">
    <property type="entry name" value="Histone acetyl transferase 1 (HAT1), N-terminal domain"/>
    <property type="match status" value="1"/>
</dbReference>
<dbReference type="InterPro" id="IPR016181">
    <property type="entry name" value="Acyl_CoA_acyltransferase"/>
</dbReference>
<dbReference type="InterPro" id="IPR000182">
    <property type="entry name" value="GNAT_dom"/>
</dbReference>
<dbReference type="InterPro" id="IPR019467">
    <property type="entry name" value="Hat1_N"/>
</dbReference>
<dbReference type="InterPro" id="IPR037113">
    <property type="entry name" value="Hat1_N_sf"/>
</dbReference>
<dbReference type="InterPro" id="IPR017380">
    <property type="entry name" value="Hist_AcTrfase_B-typ_cat-su"/>
</dbReference>
<dbReference type="InterPro" id="IPR013523">
    <property type="entry name" value="Hist_AcTrfase_HAT1_C"/>
</dbReference>
<dbReference type="PANTHER" id="PTHR12046">
    <property type="entry name" value="HISTONE ACETYLTRANSFERASE TYPE B CATALYTIC SUBUNIT"/>
    <property type="match status" value="1"/>
</dbReference>
<dbReference type="Pfam" id="PF00583">
    <property type="entry name" value="Acetyltransf_1"/>
    <property type="match status" value="1"/>
</dbReference>
<dbReference type="Pfam" id="PF21184">
    <property type="entry name" value="HAT1_C_fung"/>
    <property type="match status" value="1"/>
</dbReference>
<dbReference type="Pfam" id="PF10394">
    <property type="entry name" value="Hat1_N"/>
    <property type="match status" value="1"/>
</dbReference>
<dbReference type="PIRSF" id="PIRSF038084">
    <property type="entry name" value="HAT-B_cat"/>
    <property type="match status" value="1"/>
</dbReference>
<dbReference type="SUPFAM" id="SSF55729">
    <property type="entry name" value="Acyl-CoA N-acyltransferases (Nat)"/>
    <property type="match status" value="1"/>
</dbReference>
<dbReference type="PROSITE" id="PS51186">
    <property type="entry name" value="GNAT"/>
    <property type="match status" value="1"/>
</dbReference>
<feature type="chain" id="PRO_0000227720" description="Histone acetyltransferase type B catalytic subunit">
    <location>
        <begin position="1"/>
        <end position="388"/>
    </location>
</feature>
<feature type="domain" description="N-acetyltransferase" evidence="4">
    <location>
        <begin position="142"/>
        <end position="306"/>
    </location>
</feature>
<feature type="region of interest" description="Interaction with histone H4 N-terminus" evidence="3">
    <location>
        <begin position="197"/>
        <end position="199"/>
    </location>
</feature>
<feature type="active site" description="Proton donor/acceptor" evidence="3">
    <location>
        <position position="258"/>
    </location>
</feature>
<feature type="binding site" evidence="3">
    <location>
        <begin position="223"/>
        <end position="225"/>
    </location>
    <ligand>
        <name>acetyl-CoA</name>
        <dbReference type="ChEBI" id="CHEBI:57288"/>
    </ligand>
</feature>
<feature type="binding site" evidence="3">
    <location>
        <begin position="230"/>
        <end position="236"/>
    </location>
    <ligand>
        <name>acetyl-CoA</name>
        <dbReference type="ChEBI" id="CHEBI:57288"/>
    </ligand>
</feature>
<feature type="site" description="Interaction with histone H4 N-terminus" evidence="2">
    <location>
        <position position="177"/>
    </location>
</feature>
<accession>Q6FKS5</accession>
<evidence type="ECO:0000250" key="1"/>
<evidence type="ECO:0000250" key="2">
    <source>
        <dbReference type="UniProtKB" id="O14929"/>
    </source>
</evidence>
<evidence type="ECO:0000250" key="3">
    <source>
        <dbReference type="UniProtKB" id="Q12341"/>
    </source>
</evidence>
<evidence type="ECO:0000255" key="4">
    <source>
        <dbReference type="PROSITE-ProRule" id="PRU00532"/>
    </source>
</evidence>
<evidence type="ECO:0000305" key="5"/>
<keyword id="KW-0012">Acyltransferase</keyword>
<keyword id="KW-0156">Chromatin regulator</keyword>
<keyword id="KW-0963">Cytoplasm</keyword>
<keyword id="KW-0227">DNA damage</keyword>
<keyword id="KW-0234">DNA repair</keyword>
<keyword id="KW-0539">Nucleus</keyword>
<keyword id="KW-1185">Reference proteome</keyword>
<keyword id="KW-0808">Transferase</keyword>
<reference key="1">
    <citation type="journal article" date="2004" name="Nature">
        <title>Genome evolution in yeasts.</title>
        <authorList>
            <person name="Dujon B."/>
            <person name="Sherman D."/>
            <person name="Fischer G."/>
            <person name="Durrens P."/>
            <person name="Casaregola S."/>
            <person name="Lafontaine I."/>
            <person name="de Montigny J."/>
            <person name="Marck C."/>
            <person name="Neuveglise C."/>
            <person name="Talla E."/>
            <person name="Goffard N."/>
            <person name="Frangeul L."/>
            <person name="Aigle M."/>
            <person name="Anthouard V."/>
            <person name="Babour A."/>
            <person name="Barbe V."/>
            <person name="Barnay S."/>
            <person name="Blanchin S."/>
            <person name="Beckerich J.-M."/>
            <person name="Beyne E."/>
            <person name="Bleykasten C."/>
            <person name="Boisrame A."/>
            <person name="Boyer J."/>
            <person name="Cattolico L."/>
            <person name="Confanioleri F."/>
            <person name="de Daruvar A."/>
            <person name="Despons L."/>
            <person name="Fabre E."/>
            <person name="Fairhead C."/>
            <person name="Ferry-Dumazet H."/>
            <person name="Groppi A."/>
            <person name="Hantraye F."/>
            <person name="Hennequin C."/>
            <person name="Jauniaux N."/>
            <person name="Joyet P."/>
            <person name="Kachouri R."/>
            <person name="Kerrest A."/>
            <person name="Koszul R."/>
            <person name="Lemaire M."/>
            <person name="Lesur I."/>
            <person name="Ma L."/>
            <person name="Muller H."/>
            <person name="Nicaud J.-M."/>
            <person name="Nikolski M."/>
            <person name="Oztas S."/>
            <person name="Ozier-Kalogeropoulos O."/>
            <person name="Pellenz S."/>
            <person name="Potier S."/>
            <person name="Richard G.-F."/>
            <person name="Straub M.-L."/>
            <person name="Suleau A."/>
            <person name="Swennen D."/>
            <person name="Tekaia F."/>
            <person name="Wesolowski-Louvel M."/>
            <person name="Westhof E."/>
            <person name="Wirth B."/>
            <person name="Zeniou-Meyer M."/>
            <person name="Zivanovic Y."/>
            <person name="Bolotin-Fukuhara M."/>
            <person name="Thierry A."/>
            <person name="Bouchier C."/>
            <person name="Caudron B."/>
            <person name="Scarpelli C."/>
            <person name="Gaillardin C."/>
            <person name="Weissenbach J."/>
            <person name="Wincker P."/>
            <person name="Souciet J.-L."/>
        </authorList>
    </citation>
    <scope>NUCLEOTIDE SEQUENCE [LARGE SCALE GENOMIC DNA]</scope>
    <source>
        <strain>ATCC 2001 / BCRC 20586 / JCM 3761 / NBRC 0622 / NRRL Y-65 / CBS 138</strain>
    </source>
</reference>
<organism>
    <name type="scientific">Candida glabrata (strain ATCC 2001 / BCRC 20586 / JCM 3761 / NBRC 0622 / NRRL Y-65 / CBS 138)</name>
    <name type="common">Yeast</name>
    <name type="synonym">Nakaseomyces glabratus</name>
    <dbReference type="NCBI Taxonomy" id="284593"/>
    <lineage>
        <taxon>Eukaryota</taxon>
        <taxon>Fungi</taxon>
        <taxon>Dikarya</taxon>
        <taxon>Ascomycota</taxon>
        <taxon>Saccharomycotina</taxon>
        <taxon>Saccharomycetes</taxon>
        <taxon>Saccharomycetales</taxon>
        <taxon>Saccharomycetaceae</taxon>
        <taxon>Nakaseomyces</taxon>
    </lineage>
</organism>